<sequence length="933" mass="104028">MAVQPKETLQLEGAAEVGFVRFFEGMPEKPSTTVGLFDRGDFYTAHGEDALLAAREVFKTQGVIKYMGPAGAKTLQTVVLSKMNFESFVKDLLLVRHYRVEVYKNKAGNKASKENDWYLAYKASPGNLSQFEDILFGNNDMATSIGIMGIKLSTVDGQRQVGVGDVDSTQRKLGLCEFPDNDQFSNLEALLIQIGPKECILPGGETAGDMGKLRQVIQRGGILITERKRIDFSTKDIYQDLNRLLKGRKGEQMNSAVLPEMENQVAVSSLSAVIKFLELLSDDSNFGQFELATFDFSQYMKLDMAAVRALNLFQGSVEDTTGSQSLAAFLNKCKTAQGQRLVSQWIKQPLMDKNRIEERLNLVEAFVEDSELRRALQEDLLRRFPDLNRLAKKFQRQAANLQDCYRLYQGVKQLPNVIQALEKYQGRHQALLLAVFVTPLTDLRSDFSKFQEKIETTLDMDQVENHEFLVKPSFDPNLSELREVMDGLEKKMQSTLISAARGLGLDPGKQIKLDSSAQFGYYFRVTCKEEKVLRNNKNFSTVDIQKNGVKFTNSELSSLNEEYTKNKGEYEEAQDAIVKEIVNISSGYVEPMQTVNDVLAHLDAVVSFAHVSNAAPVPYVRPVILEKGKGRIIVKASRHACVEVQHDVAFIPNDVHFEKDKQMFHIITGPNMGGKSTYIRQTGVIVLMAQIGCFVPCESAEVSIVDCILARVGAGDSQLKGVSTFMAEMLETASILRSATKDSLIIIDELGRGTSTYDGFGLAWAISEYIATNIGAFCMFATHFHELTALASQIPTVNNLHVTALTTEETLTMLYQVKTGVCDQSFGIHVAELANFPRHVIECAKQKALELEEFQSIGTSQGHDETQPAAKRRCLEREQGEKIILEFLSKVKQVPFTDLSEESVSVKLKQLKAEVLAKNNSFVNEIISRVKAP</sequence>
<proteinExistence type="evidence at transcript level"/>
<protein>
    <recommendedName>
        <fullName>DNA mismatch repair protein Msh2</fullName>
    </recommendedName>
    <alternativeName>
        <fullName>MutS protein homolog 2</fullName>
    </alternativeName>
</protein>
<feature type="initiator methionine" description="Removed" evidence="2">
    <location>
        <position position="1"/>
    </location>
</feature>
<feature type="chain" id="PRO_0000115185" description="DNA mismatch repair protein Msh2">
    <location>
        <begin position="2"/>
        <end position="933"/>
    </location>
</feature>
<feature type="region of interest" description="Interaction with EXO1" evidence="1">
    <location>
        <begin position="601"/>
        <end position="671"/>
    </location>
</feature>
<feature type="binding site" evidence="4">
    <location>
        <begin position="669"/>
        <end position="676"/>
    </location>
    <ligand>
        <name>ATP</name>
        <dbReference type="ChEBI" id="CHEBI:30616"/>
    </ligand>
</feature>
<feature type="modified residue" description="N-acetylalanine" evidence="2">
    <location>
        <position position="2"/>
    </location>
</feature>
<feature type="modified residue" description="N6-acetyllysine" evidence="3">
    <location>
        <position position="567"/>
    </location>
</feature>
<feature type="modified residue" description="N6-acetyllysine" evidence="2">
    <location>
        <position position="845"/>
    </location>
</feature>
<feature type="modified residue" description="N6-acetyllysine" evidence="2">
    <location>
        <position position="847"/>
    </location>
</feature>
<feature type="modified residue" description="N6-acetyllysine" evidence="2">
    <location>
        <position position="871"/>
    </location>
</feature>
<feature type="modified residue" description="N6-acetyllysine" evidence="2">
    <location>
        <position position="892"/>
    </location>
</feature>
<feature type="modified residue" description="Phosphoserine" evidence="2">
    <location>
        <position position="921"/>
    </location>
</feature>
<feature type="cross-link" description="Glycyl lysine isopeptide (Lys-Gly) (interchain with G-Cter in ubiquitin)" evidence="2">
    <location>
        <position position="845"/>
    </location>
</feature>
<feature type="cross-link" description="Glycyl lysine isopeptide (Lys-Gly) (interchain with G-Cter in ubiquitin)" evidence="2">
    <location>
        <position position="847"/>
    </location>
</feature>
<feature type="cross-link" description="Glycyl lysine isopeptide (Lys-Gly) (interchain with G-Cter in ubiquitin)" evidence="2">
    <location>
        <position position="871"/>
    </location>
</feature>
<feature type="cross-link" description="Glycyl lysine isopeptide (Lys-Gly) (interchain with G-Cter in ubiquitin)" evidence="2">
    <location>
        <position position="892"/>
    </location>
</feature>
<keyword id="KW-0007">Acetylation</keyword>
<keyword id="KW-0067">ATP-binding</keyword>
<keyword id="KW-0131">Cell cycle</keyword>
<keyword id="KW-0158">Chromosome</keyword>
<keyword id="KW-0227">DNA damage</keyword>
<keyword id="KW-0234">DNA repair</keyword>
<keyword id="KW-0238">DNA-binding</keyword>
<keyword id="KW-1017">Isopeptide bond</keyword>
<keyword id="KW-0547">Nucleotide-binding</keyword>
<keyword id="KW-0539">Nucleus</keyword>
<keyword id="KW-0597">Phosphoprotein</keyword>
<keyword id="KW-1185">Reference proteome</keyword>
<keyword id="KW-0832">Ubl conjugation</keyword>
<name>MSH2_RAT</name>
<reference key="1">
    <citation type="journal article" date="1997" name="Gene">
        <title>Cloning of the cDNA encoding rat homologue of the mismatch repair gene MSH2 and its expression during spermatogenesis.</title>
        <authorList>
            <person name="Vani R.G."/>
            <person name="Rao M.R."/>
        </authorList>
    </citation>
    <scope>NUCLEOTIDE SEQUENCE [MRNA]</scope>
    <source>
        <tissue>Testis</tissue>
    </source>
</reference>
<evidence type="ECO:0000250" key="1"/>
<evidence type="ECO:0000250" key="2">
    <source>
        <dbReference type="UniProtKB" id="P43246"/>
    </source>
</evidence>
<evidence type="ECO:0000250" key="3">
    <source>
        <dbReference type="UniProtKB" id="P43247"/>
    </source>
</evidence>
<evidence type="ECO:0000255" key="4"/>
<evidence type="ECO:0000305" key="5"/>
<accession>P54275</accession>
<gene>
    <name type="primary">Msh2</name>
</gene>
<organism>
    <name type="scientific">Rattus norvegicus</name>
    <name type="common">Rat</name>
    <dbReference type="NCBI Taxonomy" id="10116"/>
    <lineage>
        <taxon>Eukaryota</taxon>
        <taxon>Metazoa</taxon>
        <taxon>Chordata</taxon>
        <taxon>Craniata</taxon>
        <taxon>Vertebrata</taxon>
        <taxon>Euteleostomi</taxon>
        <taxon>Mammalia</taxon>
        <taxon>Eutheria</taxon>
        <taxon>Euarchontoglires</taxon>
        <taxon>Glires</taxon>
        <taxon>Rodentia</taxon>
        <taxon>Myomorpha</taxon>
        <taxon>Muroidea</taxon>
        <taxon>Muridae</taxon>
        <taxon>Murinae</taxon>
        <taxon>Rattus</taxon>
    </lineage>
</organism>
<comment type="function">
    <text evidence="2">Component of the post-replicative DNA mismatch repair system (MMR). Forms two different heterodimers: MutS alpha (MSH2-MSH6 heterodimer) and MutS beta (MSH2-MSH3 heterodimer) which binds to DNA mismatches thereby initiating DNA repair. When bound, heterodimers bend the DNA helix and shields approximately 20 base pairs. MutS alpha recognizes single base mismatches and dinucleotide insertion-deletion loops (IDL) in the DNA. MutS beta recognizes larger insertion-deletion loops up to 13 nucleotides long. After mismatch binding, MutS alpha or beta forms a ternary complex with the MutL alpha heterodimer, which is thought to be responsible for directing the downstream MMR events, including strand discrimination, excision, and resynthesis. Recruits DNA helicase MCM9 to chromatin which unwinds the mismatch containing DNA strand. ATP binding and hydrolysis play a pivotal role in mismatch repair functions. The ATPase activity associated with MutS alpha regulates binding similar to a molecular switch: mismatched DNA provokes ADP--&gt;ATP exchange, resulting in a discernible conformational transition that converts MutS alpha into a sliding clamp capable of hydrolysis-independent diffusion along the DNA backbone. This transition is crucial for mismatch repair. MutS alpha may also play a role in DNA homologous recombination repair. In melanocytes may modulate both UV-B-induced cell cycle regulation and apoptosis.</text>
</comment>
<comment type="subunit">
    <text evidence="2">Component of the DNA mismatch repair (MMR) complex composed at least of MCM9, MCM8,MSH2, MSH3, MSH6, PMS1 and MLH1. Heterodimer consisting of MSH2-MSH6 (MutS alpha) or MSH2-MSH3 (MutS beta). Both heterodimers form a ternary complex with MutL alpha (MLH1-PMS1). Interacts with MCM9; the interaction recruits MCM9 to chromatin. Interacts with MCM8. Interacts with EXO1. Part of the BRCA1-associated genome surveillance complex (BASC), which contains BRCA1, MSH2, MSH6, MLH1, ATM, BLM, PMS2 and the RAD50-MRE11-NBS1 protein complex. This association could be a dynamic process changing throughout the cell cycle and within subnuclear domains. Interacts with ATR. Interacts with SLX4/BTBD12; this interaction is direct and links MutS beta to SLX4, a subunit of different structure-specific endonucleases. Interacts with SMARCAD1.</text>
</comment>
<comment type="subcellular location">
    <subcellularLocation>
        <location evidence="2">Nucleus</location>
    </subcellularLocation>
    <subcellularLocation>
        <location evidence="2">Chromosome</location>
    </subcellularLocation>
</comment>
<comment type="PTM">
    <text evidence="2">Sequentially deacetylated and polyubiquitinated by HDAC6, leading to MSH2 degradation.</text>
</comment>
<comment type="similarity">
    <text evidence="5">Belongs to the DNA mismatch repair MutS family.</text>
</comment>
<dbReference type="EMBL" id="X93591">
    <property type="protein sequence ID" value="CAA63789.1"/>
    <property type="molecule type" value="mRNA"/>
</dbReference>
<dbReference type="PIR" id="JC6184">
    <property type="entry name" value="JC6184"/>
</dbReference>
<dbReference type="RefSeq" id="NP_112320.1">
    <property type="nucleotide sequence ID" value="NM_031058.1"/>
</dbReference>
<dbReference type="SMR" id="P54275"/>
<dbReference type="BioGRID" id="249587">
    <property type="interactions" value="1"/>
</dbReference>
<dbReference type="FunCoup" id="P54275">
    <property type="interactions" value="3337"/>
</dbReference>
<dbReference type="STRING" id="10116.ENSRNOP00000021538"/>
<dbReference type="iPTMnet" id="P54275"/>
<dbReference type="PhosphoSitePlus" id="P54275"/>
<dbReference type="jPOST" id="P54275"/>
<dbReference type="PaxDb" id="10116-ENSRNOP00000021538"/>
<dbReference type="GeneID" id="81709"/>
<dbReference type="KEGG" id="rno:81709"/>
<dbReference type="UCSC" id="RGD:620786">
    <property type="organism name" value="rat"/>
</dbReference>
<dbReference type="AGR" id="RGD:620786"/>
<dbReference type="CTD" id="4436"/>
<dbReference type="RGD" id="620786">
    <property type="gene designation" value="Msh2"/>
</dbReference>
<dbReference type="eggNOG" id="KOG0219">
    <property type="taxonomic scope" value="Eukaryota"/>
</dbReference>
<dbReference type="InParanoid" id="P54275"/>
<dbReference type="OrthoDB" id="295033at2759"/>
<dbReference type="PhylomeDB" id="P54275"/>
<dbReference type="Reactome" id="R-RNO-5358565">
    <property type="pathway name" value="Mismatch repair (MMR) directed by MSH2:MSH6 (MutSalpha)"/>
</dbReference>
<dbReference type="PRO" id="PR:P54275"/>
<dbReference type="Proteomes" id="UP000002494">
    <property type="component" value="Unplaced"/>
</dbReference>
<dbReference type="GO" id="GO:0005694">
    <property type="term" value="C:chromosome"/>
    <property type="evidence" value="ECO:0007669"/>
    <property type="project" value="UniProtKB-SubCell"/>
</dbReference>
<dbReference type="GO" id="GO:0032301">
    <property type="term" value="C:MutSalpha complex"/>
    <property type="evidence" value="ECO:0000250"/>
    <property type="project" value="UniProtKB"/>
</dbReference>
<dbReference type="GO" id="GO:0032302">
    <property type="term" value="C:MutSbeta complex"/>
    <property type="evidence" value="ECO:0000266"/>
    <property type="project" value="RGD"/>
</dbReference>
<dbReference type="GO" id="GO:0005634">
    <property type="term" value="C:nucleus"/>
    <property type="evidence" value="ECO:0000266"/>
    <property type="project" value="RGD"/>
</dbReference>
<dbReference type="GO" id="GO:0005524">
    <property type="term" value="F:ATP binding"/>
    <property type="evidence" value="ECO:0007669"/>
    <property type="project" value="UniProtKB-KW"/>
</dbReference>
<dbReference type="GO" id="GO:0016887">
    <property type="term" value="F:ATP hydrolysis activity"/>
    <property type="evidence" value="ECO:0000266"/>
    <property type="project" value="RGD"/>
</dbReference>
<dbReference type="GO" id="GO:0008094">
    <property type="term" value="F:ATP-dependent activity, acting on DNA"/>
    <property type="evidence" value="ECO:0000266"/>
    <property type="project" value="RGD"/>
</dbReference>
<dbReference type="GO" id="GO:0140664">
    <property type="term" value="F:ATP-dependent DNA damage sensor activity"/>
    <property type="evidence" value="ECO:0007669"/>
    <property type="project" value="InterPro"/>
</dbReference>
<dbReference type="GO" id="GO:0019237">
    <property type="term" value="F:centromeric DNA binding"/>
    <property type="evidence" value="ECO:0000266"/>
    <property type="project" value="RGD"/>
</dbReference>
<dbReference type="GO" id="GO:0003682">
    <property type="term" value="F:chromatin binding"/>
    <property type="evidence" value="ECO:0000266"/>
    <property type="project" value="RGD"/>
</dbReference>
<dbReference type="GO" id="GO:0003684">
    <property type="term" value="F:damaged DNA binding"/>
    <property type="evidence" value="ECO:0000266"/>
    <property type="project" value="RGD"/>
</dbReference>
<dbReference type="GO" id="GO:0003677">
    <property type="term" value="F:DNA binding"/>
    <property type="evidence" value="ECO:0000250"/>
    <property type="project" value="UniProtKB"/>
</dbReference>
<dbReference type="GO" id="GO:0032137">
    <property type="term" value="F:guanine/thymine mispair binding"/>
    <property type="evidence" value="ECO:0000266"/>
    <property type="project" value="RGD"/>
</dbReference>
<dbReference type="GO" id="GO:0030983">
    <property type="term" value="F:mismatched DNA binding"/>
    <property type="evidence" value="ECO:0000266"/>
    <property type="project" value="RGD"/>
</dbReference>
<dbReference type="GO" id="GO:0042803">
    <property type="term" value="F:protein homodimerization activity"/>
    <property type="evidence" value="ECO:0000266"/>
    <property type="project" value="RGD"/>
</dbReference>
<dbReference type="GO" id="GO:0030183">
    <property type="term" value="P:B cell differentiation"/>
    <property type="evidence" value="ECO:0000266"/>
    <property type="project" value="RGD"/>
</dbReference>
<dbReference type="GO" id="GO:0019724">
    <property type="term" value="P:B cell mediated immunity"/>
    <property type="evidence" value="ECO:0000266"/>
    <property type="project" value="RGD"/>
</dbReference>
<dbReference type="GO" id="GO:0008340">
    <property type="term" value="P:determination of adult lifespan"/>
    <property type="evidence" value="ECO:0000266"/>
    <property type="project" value="RGD"/>
</dbReference>
<dbReference type="GO" id="GO:0006974">
    <property type="term" value="P:DNA damage response"/>
    <property type="evidence" value="ECO:0000266"/>
    <property type="project" value="RGD"/>
</dbReference>
<dbReference type="GO" id="GO:0006281">
    <property type="term" value="P:DNA repair"/>
    <property type="evidence" value="ECO:0000266"/>
    <property type="project" value="RGD"/>
</dbReference>
<dbReference type="GO" id="GO:0006302">
    <property type="term" value="P:double-strand break repair"/>
    <property type="evidence" value="ECO:0000266"/>
    <property type="project" value="RGD"/>
</dbReference>
<dbReference type="GO" id="GO:0007281">
    <property type="term" value="P:germ cell development"/>
    <property type="evidence" value="ECO:0000266"/>
    <property type="project" value="RGD"/>
</dbReference>
<dbReference type="GO" id="GO:0001701">
    <property type="term" value="P:in utero embryonic development"/>
    <property type="evidence" value="ECO:0000266"/>
    <property type="project" value="RGD"/>
</dbReference>
<dbReference type="GO" id="GO:0008630">
    <property type="term" value="P:intrinsic apoptotic signaling pathway in response to DNA damage"/>
    <property type="evidence" value="ECO:0000266"/>
    <property type="project" value="RGD"/>
</dbReference>
<dbReference type="GO" id="GO:0042771">
    <property type="term" value="P:intrinsic apoptotic signaling pathway in response to DNA damage by p53 class mediator"/>
    <property type="evidence" value="ECO:0000266"/>
    <property type="project" value="RGD"/>
</dbReference>
<dbReference type="GO" id="GO:0045190">
    <property type="term" value="P:isotype switching"/>
    <property type="evidence" value="ECO:0000266"/>
    <property type="project" value="RGD"/>
</dbReference>
<dbReference type="GO" id="GO:0043570">
    <property type="term" value="P:maintenance of DNA repeat elements"/>
    <property type="evidence" value="ECO:0000266"/>
    <property type="project" value="RGD"/>
</dbReference>
<dbReference type="GO" id="GO:0008584">
    <property type="term" value="P:male gonad development"/>
    <property type="evidence" value="ECO:0000266"/>
    <property type="project" value="RGD"/>
</dbReference>
<dbReference type="GO" id="GO:0006298">
    <property type="term" value="P:mismatch repair"/>
    <property type="evidence" value="ECO:0000266"/>
    <property type="project" value="RGD"/>
</dbReference>
<dbReference type="GO" id="GO:0031573">
    <property type="term" value="P:mitotic intra-S DNA damage checkpoint signaling"/>
    <property type="evidence" value="ECO:0000266"/>
    <property type="project" value="RGD"/>
</dbReference>
<dbReference type="GO" id="GO:0006312">
    <property type="term" value="P:mitotic recombination"/>
    <property type="evidence" value="ECO:0000318"/>
    <property type="project" value="GO_Central"/>
</dbReference>
<dbReference type="GO" id="GO:0045910">
    <property type="term" value="P:negative regulation of DNA recombination"/>
    <property type="evidence" value="ECO:0000266"/>
    <property type="project" value="RGD"/>
</dbReference>
<dbReference type="GO" id="GO:0043524">
    <property type="term" value="P:negative regulation of neuron apoptotic process"/>
    <property type="evidence" value="ECO:0000266"/>
    <property type="project" value="RGD"/>
</dbReference>
<dbReference type="GO" id="GO:0006119">
    <property type="term" value="P:oxidative phosphorylation"/>
    <property type="evidence" value="ECO:0000266"/>
    <property type="project" value="RGD"/>
</dbReference>
<dbReference type="GO" id="GO:0048298">
    <property type="term" value="P:positive regulation of isotype switching to IgA isotypes"/>
    <property type="evidence" value="ECO:0000266"/>
    <property type="project" value="RGD"/>
</dbReference>
<dbReference type="GO" id="GO:0048304">
    <property type="term" value="P:positive regulation of isotype switching to IgG isotypes"/>
    <property type="evidence" value="ECO:0000266"/>
    <property type="project" value="RGD"/>
</dbReference>
<dbReference type="GO" id="GO:0006301">
    <property type="term" value="P:postreplication repair"/>
    <property type="evidence" value="ECO:0000250"/>
    <property type="project" value="UniProtKB"/>
</dbReference>
<dbReference type="GO" id="GO:0051726">
    <property type="term" value="P:regulation of cell cycle"/>
    <property type="evidence" value="ECO:0000266"/>
    <property type="project" value="RGD"/>
</dbReference>
<dbReference type="GO" id="GO:0043200">
    <property type="term" value="P:response to amino acid"/>
    <property type="evidence" value="ECO:0000270"/>
    <property type="project" value="RGD"/>
</dbReference>
<dbReference type="GO" id="GO:1905235">
    <property type="term" value="P:response to quercetin"/>
    <property type="evidence" value="ECO:0000270"/>
    <property type="project" value="RGD"/>
</dbReference>
<dbReference type="GO" id="GO:0010224">
    <property type="term" value="P:response to UV-B"/>
    <property type="evidence" value="ECO:0000266"/>
    <property type="project" value="RGD"/>
</dbReference>
<dbReference type="GO" id="GO:0010165">
    <property type="term" value="P:response to X-ray"/>
    <property type="evidence" value="ECO:0000266"/>
    <property type="project" value="RGD"/>
</dbReference>
<dbReference type="GO" id="GO:0009410">
    <property type="term" value="P:response to xenobiotic stimulus"/>
    <property type="evidence" value="ECO:0000270"/>
    <property type="project" value="RGD"/>
</dbReference>
<dbReference type="GO" id="GO:0016446">
    <property type="term" value="P:somatic hypermutation of immunoglobulin genes"/>
    <property type="evidence" value="ECO:0000266"/>
    <property type="project" value="RGD"/>
</dbReference>
<dbReference type="GO" id="GO:0016447">
    <property type="term" value="P:somatic recombination of immunoglobulin gene segments"/>
    <property type="evidence" value="ECO:0000266"/>
    <property type="project" value="RGD"/>
</dbReference>
<dbReference type="GO" id="GO:0002204">
    <property type="term" value="P:somatic recombination of immunoglobulin genes involved in immune response"/>
    <property type="evidence" value="ECO:0000266"/>
    <property type="project" value="RGD"/>
</dbReference>
<dbReference type="GO" id="GO:0007283">
    <property type="term" value="P:spermatogenesis"/>
    <property type="evidence" value="ECO:0000270"/>
    <property type="project" value="RGD"/>
</dbReference>
<dbReference type="CDD" id="cd03285">
    <property type="entry name" value="ABC_MSH2_euk"/>
    <property type="match status" value="1"/>
</dbReference>
<dbReference type="FunFam" id="1.10.1420.10:FF:000003">
    <property type="entry name" value="DNA mismatch repair protein"/>
    <property type="match status" value="1"/>
</dbReference>
<dbReference type="FunFam" id="1.10.1420.10:FF:000009">
    <property type="entry name" value="DNA mismatch repair protein"/>
    <property type="match status" value="1"/>
</dbReference>
<dbReference type="FunFam" id="3.30.420.110:FF:000002">
    <property type="entry name" value="DNA mismatch repair protein"/>
    <property type="match status" value="1"/>
</dbReference>
<dbReference type="FunFam" id="3.40.1170.10:FF:000003">
    <property type="entry name" value="DNA mismatch repair protein"/>
    <property type="match status" value="1"/>
</dbReference>
<dbReference type="FunFam" id="3.40.50.300:FF:000523">
    <property type="entry name" value="DNA mismatch repair protein"/>
    <property type="match status" value="1"/>
</dbReference>
<dbReference type="Gene3D" id="1.10.1420.10">
    <property type="match status" value="2"/>
</dbReference>
<dbReference type="Gene3D" id="3.40.1170.10">
    <property type="entry name" value="DNA repair protein MutS, domain I"/>
    <property type="match status" value="1"/>
</dbReference>
<dbReference type="Gene3D" id="3.30.420.110">
    <property type="entry name" value="MutS, connector domain"/>
    <property type="match status" value="1"/>
</dbReference>
<dbReference type="Gene3D" id="3.40.50.300">
    <property type="entry name" value="P-loop containing nucleotide triphosphate hydrolases"/>
    <property type="match status" value="1"/>
</dbReference>
<dbReference type="InterPro" id="IPR011184">
    <property type="entry name" value="DNA_mismatch_repair_Msh2"/>
</dbReference>
<dbReference type="InterPro" id="IPR007695">
    <property type="entry name" value="DNA_mismatch_repair_MutS-lik_N"/>
</dbReference>
<dbReference type="InterPro" id="IPR000432">
    <property type="entry name" value="DNA_mismatch_repair_MutS_C"/>
</dbReference>
<dbReference type="InterPro" id="IPR007861">
    <property type="entry name" value="DNA_mismatch_repair_MutS_clamp"/>
</dbReference>
<dbReference type="InterPro" id="IPR007696">
    <property type="entry name" value="DNA_mismatch_repair_MutS_core"/>
</dbReference>
<dbReference type="InterPro" id="IPR016151">
    <property type="entry name" value="DNA_mismatch_repair_MutS_N"/>
</dbReference>
<dbReference type="InterPro" id="IPR036187">
    <property type="entry name" value="DNA_mismatch_repair_MutS_sf"/>
</dbReference>
<dbReference type="InterPro" id="IPR007860">
    <property type="entry name" value="DNA_mmatch_repair_MutS_con_dom"/>
</dbReference>
<dbReference type="InterPro" id="IPR032642">
    <property type="entry name" value="Msh2_ATP-bd"/>
</dbReference>
<dbReference type="InterPro" id="IPR045076">
    <property type="entry name" value="MutS"/>
</dbReference>
<dbReference type="InterPro" id="IPR036678">
    <property type="entry name" value="MutS_con_dom_sf"/>
</dbReference>
<dbReference type="InterPro" id="IPR027417">
    <property type="entry name" value="P-loop_NTPase"/>
</dbReference>
<dbReference type="NCBIfam" id="NF003810">
    <property type="entry name" value="PRK05399.1"/>
    <property type="match status" value="1"/>
</dbReference>
<dbReference type="PANTHER" id="PTHR11361:SF35">
    <property type="entry name" value="DNA MISMATCH REPAIR PROTEIN MSH2"/>
    <property type="match status" value="1"/>
</dbReference>
<dbReference type="PANTHER" id="PTHR11361">
    <property type="entry name" value="DNA MISMATCH REPAIR PROTEIN MUTS FAMILY MEMBER"/>
    <property type="match status" value="1"/>
</dbReference>
<dbReference type="Pfam" id="PF01624">
    <property type="entry name" value="MutS_I"/>
    <property type="match status" value="1"/>
</dbReference>
<dbReference type="Pfam" id="PF05188">
    <property type="entry name" value="MutS_II"/>
    <property type="match status" value="1"/>
</dbReference>
<dbReference type="Pfam" id="PF05192">
    <property type="entry name" value="MutS_III"/>
    <property type="match status" value="1"/>
</dbReference>
<dbReference type="Pfam" id="PF05190">
    <property type="entry name" value="MutS_IV"/>
    <property type="match status" value="1"/>
</dbReference>
<dbReference type="Pfam" id="PF00488">
    <property type="entry name" value="MutS_V"/>
    <property type="match status" value="1"/>
</dbReference>
<dbReference type="PIRSF" id="PIRSF005813">
    <property type="entry name" value="MSH2"/>
    <property type="match status" value="1"/>
</dbReference>
<dbReference type="SMART" id="SM00534">
    <property type="entry name" value="MUTSac"/>
    <property type="match status" value="1"/>
</dbReference>
<dbReference type="SMART" id="SM00533">
    <property type="entry name" value="MUTSd"/>
    <property type="match status" value="1"/>
</dbReference>
<dbReference type="SUPFAM" id="SSF48334">
    <property type="entry name" value="DNA repair protein MutS, domain III"/>
    <property type="match status" value="1"/>
</dbReference>
<dbReference type="SUPFAM" id="SSF52540">
    <property type="entry name" value="P-loop containing nucleoside triphosphate hydrolases"/>
    <property type="match status" value="1"/>
</dbReference>
<dbReference type="PROSITE" id="PS00486">
    <property type="entry name" value="DNA_MISMATCH_REPAIR_2"/>
    <property type="match status" value="1"/>
</dbReference>